<dbReference type="EC" id="3.6.-.-" evidence="3"/>
<dbReference type="EMBL" id="AC020622">
    <property type="status" value="NOT_ANNOTATED_CDS"/>
    <property type="molecule type" value="Genomic_DNA"/>
</dbReference>
<dbReference type="EMBL" id="CP002684">
    <property type="protein sequence ID" value="AEE27348.1"/>
    <property type="molecule type" value="Genomic_DNA"/>
</dbReference>
<dbReference type="EMBL" id="CP002684">
    <property type="protein sequence ID" value="AEE27349.1"/>
    <property type="molecule type" value="Genomic_DNA"/>
</dbReference>
<dbReference type="EMBL" id="CP002684">
    <property type="protein sequence ID" value="AEE27351.1"/>
    <property type="molecule type" value="Genomic_DNA"/>
</dbReference>
<dbReference type="EMBL" id="AY051004">
    <property type="protein sequence ID" value="AAK93681.1"/>
    <property type="molecule type" value="mRNA"/>
</dbReference>
<dbReference type="EMBL" id="AY122993">
    <property type="protein sequence ID" value="AAM67526.1"/>
    <property type="molecule type" value="mRNA"/>
</dbReference>
<dbReference type="EMBL" id="AK220895">
    <property type="protein sequence ID" value="BAD94314.1"/>
    <property type="status" value="ALT_INIT"/>
    <property type="molecule type" value="mRNA"/>
</dbReference>
<dbReference type="RefSeq" id="NP_001077445.1">
    <property type="nucleotide sequence ID" value="NM_001083976.2"/>
</dbReference>
<dbReference type="RefSeq" id="NP_563640.1">
    <property type="nucleotide sequence ID" value="NM_100071.3"/>
</dbReference>
<dbReference type="RefSeq" id="NP_849575.1">
    <property type="nucleotide sequence ID" value="NM_179244.2"/>
</dbReference>
<dbReference type="SMR" id="Q949M9"/>
<dbReference type="FunCoup" id="Q949M9">
    <property type="interactions" value="4502"/>
</dbReference>
<dbReference type="IntAct" id="Q949M9">
    <property type="interactions" value="42"/>
</dbReference>
<dbReference type="STRING" id="3702.Q949M9"/>
<dbReference type="PaxDb" id="3702-AT1G01910.4"/>
<dbReference type="ProteomicsDB" id="191808"/>
<dbReference type="EnsemblPlants" id="AT1G01910.1">
    <property type="protein sequence ID" value="AT1G01910.1"/>
    <property type="gene ID" value="AT1G01910"/>
</dbReference>
<dbReference type="EnsemblPlants" id="AT1G01910.2">
    <property type="protein sequence ID" value="AT1G01910.2"/>
    <property type="gene ID" value="AT1G01910"/>
</dbReference>
<dbReference type="EnsemblPlants" id="AT1G01910.4">
    <property type="protein sequence ID" value="AT1G01910.4"/>
    <property type="gene ID" value="AT1G01910"/>
</dbReference>
<dbReference type="GeneID" id="839305"/>
<dbReference type="Gramene" id="AT1G01910.1">
    <property type="protein sequence ID" value="AT1G01910.1"/>
    <property type="gene ID" value="AT1G01910"/>
</dbReference>
<dbReference type="Gramene" id="AT1G01910.2">
    <property type="protein sequence ID" value="AT1G01910.2"/>
    <property type="gene ID" value="AT1G01910"/>
</dbReference>
<dbReference type="Gramene" id="AT1G01910.4">
    <property type="protein sequence ID" value="AT1G01910.4"/>
    <property type="gene ID" value="AT1G01910"/>
</dbReference>
<dbReference type="KEGG" id="ath:AT1G01910"/>
<dbReference type="Araport" id="AT1G01910"/>
<dbReference type="TAIR" id="AT1G01910">
    <property type="gene designation" value="GET3A"/>
</dbReference>
<dbReference type="eggNOG" id="KOG2825">
    <property type="taxonomic scope" value="Eukaryota"/>
</dbReference>
<dbReference type="InParanoid" id="Q949M9"/>
<dbReference type="OMA" id="MDAPYEF"/>
<dbReference type="OrthoDB" id="1770at2759"/>
<dbReference type="PhylomeDB" id="Q949M9"/>
<dbReference type="CD-CODE" id="4299E36E">
    <property type="entry name" value="Nucleolus"/>
</dbReference>
<dbReference type="PRO" id="PR:Q949M9"/>
<dbReference type="Proteomes" id="UP000006548">
    <property type="component" value="Chromosome 1"/>
</dbReference>
<dbReference type="ExpressionAtlas" id="Q949M9">
    <property type="expression patterns" value="baseline and differential"/>
</dbReference>
<dbReference type="GO" id="GO:0005829">
    <property type="term" value="C:cytosol"/>
    <property type="evidence" value="ECO:0000314"/>
    <property type="project" value="TAIR"/>
</dbReference>
<dbReference type="GO" id="GO:0005576">
    <property type="term" value="C:extracellular region"/>
    <property type="evidence" value="ECO:0007005"/>
    <property type="project" value="TAIR"/>
</dbReference>
<dbReference type="GO" id="GO:0043529">
    <property type="term" value="C:GET complex"/>
    <property type="evidence" value="ECO:0000353"/>
    <property type="project" value="TAIR"/>
</dbReference>
<dbReference type="GO" id="GO:0005524">
    <property type="term" value="F:ATP binding"/>
    <property type="evidence" value="ECO:0007669"/>
    <property type="project" value="UniProtKB-UniRule"/>
</dbReference>
<dbReference type="GO" id="GO:0016887">
    <property type="term" value="F:ATP hydrolysis activity"/>
    <property type="evidence" value="ECO:0007669"/>
    <property type="project" value="InterPro"/>
</dbReference>
<dbReference type="GO" id="GO:0045048">
    <property type="term" value="P:protein insertion into ER membrane"/>
    <property type="evidence" value="ECO:0007669"/>
    <property type="project" value="UniProtKB-UniRule"/>
</dbReference>
<dbReference type="GO" id="GO:0048767">
    <property type="term" value="P:root hair elongation"/>
    <property type="evidence" value="ECO:0000315"/>
    <property type="project" value="TAIR"/>
</dbReference>
<dbReference type="CDD" id="cd02035">
    <property type="entry name" value="ArsA"/>
    <property type="match status" value="1"/>
</dbReference>
<dbReference type="FunFam" id="3.40.50.300:FF:000235">
    <property type="entry name" value="ATPase ASNA1"/>
    <property type="match status" value="1"/>
</dbReference>
<dbReference type="Gene3D" id="3.40.50.300">
    <property type="entry name" value="P-loop containing nucleotide triphosphate hydrolases"/>
    <property type="match status" value="1"/>
</dbReference>
<dbReference type="HAMAP" id="MF_03112">
    <property type="entry name" value="Asna1_Get3"/>
    <property type="match status" value="1"/>
</dbReference>
<dbReference type="InterPro" id="IPR025723">
    <property type="entry name" value="Anion-transp_ATPase-like_dom"/>
</dbReference>
<dbReference type="InterPro" id="IPR016300">
    <property type="entry name" value="ATPase_ArsA/GET3"/>
</dbReference>
<dbReference type="InterPro" id="IPR027542">
    <property type="entry name" value="ATPase_ArsA/GET3_euk"/>
</dbReference>
<dbReference type="InterPro" id="IPR027417">
    <property type="entry name" value="P-loop_NTPase"/>
</dbReference>
<dbReference type="NCBIfam" id="TIGR00345">
    <property type="entry name" value="GET3_arsA_TRC40"/>
    <property type="match status" value="1"/>
</dbReference>
<dbReference type="PANTHER" id="PTHR10803">
    <property type="entry name" value="ARSENICAL PUMP-DRIVING ATPASE ARSENITE-TRANSLOCATING ATPASE"/>
    <property type="match status" value="1"/>
</dbReference>
<dbReference type="PANTHER" id="PTHR10803:SF3">
    <property type="entry name" value="ATPASE GET3"/>
    <property type="match status" value="1"/>
</dbReference>
<dbReference type="Pfam" id="PF02374">
    <property type="entry name" value="ArsA_ATPase"/>
    <property type="match status" value="1"/>
</dbReference>
<dbReference type="SUPFAM" id="SSF52540">
    <property type="entry name" value="P-loop containing nucleoside triphosphate hydrolases"/>
    <property type="match status" value="1"/>
</dbReference>
<name>GET3A_ARATH</name>
<protein>
    <recommendedName>
        <fullName evidence="6">ATPase GET3A</fullName>
        <shortName evidence="5">AtGET3A</shortName>
        <ecNumber evidence="3">3.6.-.-</ecNumber>
    </recommendedName>
    <alternativeName>
        <fullName evidence="3">Arsenical pump-driving ATPase</fullName>
    </alternativeName>
    <alternativeName>
        <fullName evidence="3">Arsenite-stimulated ATPase</fullName>
    </alternativeName>
    <alternativeName>
        <fullName evidence="6">Guided entry of tail-anchored proteins 3 homolog A</fullName>
    </alternativeName>
</protein>
<feature type="chain" id="PRO_0000449808" description="ATPase GET3A">
    <location>
        <begin position="1"/>
        <end position="353"/>
    </location>
</feature>
<feature type="coiled-coil region" evidence="2">
    <location>
        <begin position="320"/>
        <end position="353"/>
    </location>
</feature>
<feature type="active site" evidence="3">
    <location>
        <position position="56"/>
    </location>
</feature>
<feature type="binding site" evidence="3">
    <location>
        <begin position="27"/>
        <end position="34"/>
    </location>
    <ligand>
        <name>ATP</name>
        <dbReference type="ChEBI" id="CHEBI:30616"/>
    </ligand>
</feature>
<feature type="binding site" evidence="3">
    <location>
        <position position="226"/>
    </location>
    <ligand>
        <name>ATP</name>
        <dbReference type="ChEBI" id="CHEBI:30616"/>
    </ligand>
</feature>
<feature type="binding site" evidence="3">
    <location>
        <position position="253"/>
    </location>
    <ligand>
        <name>ATP</name>
        <dbReference type="ChEBI" id="CHEBI:30616"/>
    </ligand>
</feature>
<feature type="mutagenesis site" description="Unable to complement get3a-1 mutant phenotype." evidence="4">
    <original>G</original>
    <variation>A</variation>
    <location>
        <position position="28"/>
    </location>
</feature>
<feature type="sequence conflict" description="In Ref. 4; BAD94314." evidence="6" ref="4">
    <original>P</original>
    <variation>T</variation>
    <location>
        <position position="319"/>
    </location>
</feature>
<reference key="1">
    <citation type="journal article" date="2000" name="Nature">
        <title>Sequence and analysis of chromosome 1 of the plant Arabidopsis thaliana.</title>
        <authorList>
            <person name="Theologis A."/>
            <person name="Ecker J.R."/>
            <person name="Palm C.J."/>
            <person name="Federspiel N.A."/>
            <person name="Kaul S."/>
            <person name="White O."/>
            <person name="Alonso J."/>
            <person name="Altafi H."/>
            <person name="Araujo R."/>
            <person name="Bowman C.L."/>
            <person name="Brooks S.Y."/>
            <person name="Buehler E."/>
            <person name="Chan A."/>
            <person name="Chao Q."/>
            <person name="Chen H."/>
            <person name="Cheuk R.F."/>
            <person name="Chin C.W."/>
            <person name="Chung M.K."/>
            <person name="Conn L."/>
            <person name="Conway A.B."/>
            <person name="Conway A.R."/>
            <person name="Creasy T.H."/>
            <person name="Dewar K."/>
            <person name="Dunn P."/>
            <person name="Etgu P."/>
            <person name="Feldblyum T.V."/>
            <person name="Feng J.-D."/>
            <person name="Fong B."/>
            <person name="Fujii C.Y."/>
            <person name="Gill J.E."/>
            <person name="Goldsmith A.D."/>
            <person name="Haas B."/>
            <person name="Hansen N.F."/>
            <person name="Hughes B."/>
            <person name="Huizar L."/>
            <person name="Hunter J.L."/>
            <person name="Jenkins J."/>
            <person name="Johnson-Hopson C."/>
            <person name="Khan S."/>
            <person name="Khaykin E."/>
            <person name="Kim C.J."/>
            <person name="Koo H.L."/>
            <person name="Kremenetskaia I."/>
            <person name="Kurtz D.B."/>
            <person name="Kwan A."/>
            <person name="Lam B."/>
            <person name="Langin-Hooper S."/>
            <person name="Lee A."/>
            <person name="Lee J.M."/>
            <person name="Lenz C.A."/>
            <person name="Li J.H."/>
            <person name="Li Y.-P."/>
            <person name="Lin X."/>
            <person name="Liu S.X."/>
            <person name="Liu Z.A."/>
            <person name="Luros J.S."/>
            <person name="Maiti R."/>
            <person name="Marziali A."/>
            <person name="Militscher J."/>
            <person name="Miranda M."/>
            <person name="Nguyen M."/>
            <person name="Nierman W.C."/>
            <person name="Osborne B.I."/>
            <person name="Pai G."/>
            <person name="Peterson J."/>
            <person name="Pham P.K."/>
            <person name="Rizzo M."/>
            <person name="Rooney T."/>
            <person name="Rowley D."/>
            <person name="Sakano H."/>
            <person name="Salzberg S.L."/>
            <person name="Schwartz J.R."/>
            <person name="Shinn P."/>
            <person name="Southwick A.M."/>
            <person name="Sun H."/>
            <person name="Tallon L.J."/>
            <person name="Tambunga G."/>
            <person name="Toriumi M.J."/>
            <person name="Town C.D."/>
            <person name="Utterback T."/>
            <person name="Van Aken S."/>
            <person name="Vaysberg M."/>
            <person name="Vysotskaia V.S."/>
            <person name="Walker M."/>
            <person name="Wu D."/>
            <person name="Yu G."/>
            <person name="Fraser C.M."/>
            <person name="Venter J.C."/>
            <person name="Davis R.W."/>
        </authorList>
    </citation>
    <scope>NUCLEOTIDE SEQUENCE [LARGE SCALE GENOMIC DNA]</scope>
    <source>
        <strain>cv. Columbia</strain>
    </source>
</reference>
<reference key="2">
    <citation type="journal article" date="2017" name="Plant J.">
        <title>Araport11: a complete reannotation of the Arabidopsis thaliana reference genome.</title>
        <authorList>
            <person name="Cheng C.Y."/>
            <person name="Krishnakumar V."/>
            <person name="Chan A.P."/>
            <person name="Thibaud-Nissen F."/>
            <person name="Schobel S."/>
            <person name="Town C.D."/>
        </authorList>
    </citation>
    <scope>GENOME REANNOTATION</scope>
    <source>
        <strain>cv. Columbia</strain>
    </source>
</reference>
<reference key="3">
    <citation type="journal article" date="2003" name="Science">
        <title>Empirical analysis of transcriptional activity in the Arabidopsis genome.</title>
        <authorList>
            <person name="Yamada K."/>
            <person name="Lim J."/>
            <person name="Dale J.M."/>
            <person name="Chen H."/>
            <person name="Shinn P."/>
            <person name="Palm C.J."/>
            <person name="Southwick A.M."/>
            <person name="Wu H.C."/>
            <person name="Kim C.J."/>
            <person name="Nguyen M."/>
            <person name="Pham P.K."/>
            <person name="Cheuk R.F."/>
            <person name="Karlin-Newmann G."/>
            <person name="Liu S.X."/>
            <person name="Lam B."/>
            <person name="Sakano H."/>
            <person name="Wu T."/>
            <person name="Yu G."/>
            <person name="Miranda M."/>
            <person name="Quach H.L."/>
            <person name="Tripp M."/>
            <person name="Chang C.H."/>
            <person name="Lee J.M."/>
            <person name="Toriumi M.J."/>
            <person name="Chan M.M."/>
            <person name="Tang C.C."/>
            <person name="Onodera C.S."/>
            <person name="Deng J.M."/>
            <person name="Akiyama K."/>
            <person name="Ansari Y."/>
            <person name="Arakawa T."/>
            <person name="Banh J."/>
            <person name="Banno F."/>
            <person name="Bowser L."/>
            <person name="Brooks S.Y."/>
            <person name="Carninci P."/>
            <person name="Chao Q."/>
            <person name="Choy N."/>
            <person name="Enju A."/>
            <person name="Goldsmith A.D."/>
            <person name="Gurjal M."/>
            <person name="Hansen N.F."/>
            <person name="Hayashizaki Y."/>
            <person name="Johnson-Hopson C."/>
            <person name="Hsuan V.W."/>
            <person name="Iida K."/>
            <person name="Karnes M."/>
            <person name="Khan S."/>
            <person name="Koesema E."/>
            <person name="Ishida J."/>
            <person name="Jiang P.X."/>
            <person name="Jones T."/>
            <person name="Kawai J."/>
            <person name="Kamiya A."/>
            <person name="Meyers C."/>
            <person name="Nakajima M."/>
            <person name="Narusaka M."/>
            <person name="Seki M."/>
            <person name="Sakurai T."/>
            <person name="Satou M."/>
            <person name="Tamse R."/>
            <person name="Vaysberg M."/>
            <person name="Wallender E.K."/>
            <person name="Wong C."/>
            <person name="Yamamura Y."/>
            <person name="Yuan S."/>
            <person name="Shinozaki K."/>
            <person name="Davis R.W."/>
            <person name="Theologis A."/>
            <person name="Ecker J.R."/>
        </authorList>
    </citation>
    <scope>NUCLEOTIDE SEQUENCE [LARGE SCALE MRNA]</scope>
    <source>
        <strain>cv. Columbia</strain>
    </source>
</reference>
<reference key="4">
    <citation type="submission" date="2005-03" db="EMBL/GenBank/DDBJ databases">
        <title>Large-scale analysis of RIKEN Arabidopsis full-length (RAFL) cDNAs.</title>
        <authorList>
            <person name="Totoki Y."/>
            <person name="Seki M."/>
            <person name="Ishida J."/>
            <person name="Nakajima M."/>
            <person name="Enju A."/>
            <person name="Kamiya A."/>
            <person name="Narusaka M."/>
            <person name="Shin-i T."/>
            <person name="Nakagawa M."/>
            <person name="Sakamoto N."/>
            <person name="Oishi K."/>
            <person name="Kohara Y."/>
            <person name="Kobayashi M."/>
            <person name="Toyoda A."/>
            <person name="Sakaki Y."/>
            <person name="Sakurai T."/>
            <person name="Iida K."/>
            <person name="Akiyama K."/>
            <person name="Satou M."/>
            <person name="Toyoda T."/>
            <person name="Konagaya A."/>
            <person name="Carninci P."/>
            <person name="Kawai J."/>
            <person name="Hayashizaki Y."/>
            <person name="Shinozaki K."/>
        </authorList>
    </citation>
    <scope>NUCLEOTIDE SEQUENCE [LARGE SCALE MRNA] OF 281-353</scope>
    <source>
        <strain>cv. Columbia</strain>
    </source>
</reference>
<reference key="5">
    <citation type="journal article" date="2012" name="Mol. Cell. Proteomics">
        <title>Comparative large-scale characterisation of plant vs. mammal proteins reveals similar and idiosyncratic N-alpha acetylation features.</title>
        <authorList>
            <person name="Bienvenut W.V."/>
            <person name="Sumpton D."/>
            <person name="Martinez A."/>
            <person name="Lilla S."/>
            <person name="Espagne C."/>
            <person name="Meinnel T."/>
            <person name="Giglione C."/>
        </authorList>
    </citation>
    <scope>IDENTIFICATION BY MASS SPECTROMETRY [LARGE SCALE ANALYSIS]</scope>
</reference>
<reference key="6">
    <citation type="journal article" date="2017" name="Proc. Natl. Acad. Sci. U.S.A.">
        <title>Loss of GET pathway orthologs in Arabidopsis thaliana causes root hair growth defects and affects SNARE abundance.</title>
        <authorList>
            <person name="Xing S."/>
            <person name="Mehlhorn D.G."/>
            <person name="Wallmeroth N."/>
            <person name="Asseck L.Y."/>
            <person name="Kar R."/>
            <person name="Voss A."/>
            <person name="Denninger P."/>
            <person name="Schmidt V.A."/>
            <person name="Schwarzlaender M."/>
            <person name="Stierhof Y.D."/>
            <person name="Grossmann G."/>
            <person name="Grefen C."/>
        </authorList>
    </citation>
    <scope>INTERACTION WITH GET1 AND GET4</scope>
    <scope>SUBCELLULAR LOCATION</scope>
    <scope>DISRUPTION PHENOTYPE</scope>
    <scope>MUTAGENESIS OF GLY-28</scope>
</reference>
<comment type="function">
    <text evidence="3 4">ATPase required for the post-translational delivery of tail-anchored (TA) proteins to the endoplasmic reticulum. Recognizes and selectively binds the transmembrane domain of TA proteins in the cytosol. This complex then targets to the endoplasmic reticulum by membrane-bound receptors, where the tail-anchored protein is released for insertion. This process is regulated by ATP binding and hydrolysis. ATP binding drives the homodimer towards the closed dimer state, facilitating recognition of newly synthesized TA membrane proteins. ATP hydrolysis is required for insertion. Subsequently, the homodimer reverts towards the open dimer state, lowering its affinity for the membrane-bound receptor, and returning it to the cytosol to initiate a new round of targeting (By similarity). Involved in the control of root hair growth through the regulation of syntaxin SYP123 expression (PubMed:28096354).</text>
</comment>
<comment type="catalytic activity">
    <reaction evidence="1">
        <text>ATP + H2O = ADP + phosphate + H(+)</text>
        <dbReference type="Rhea" id="RHEA:13065"/>
        <dbReference type="ChEBI" id="CHEBI:15377"/>
        <dbReference type="ChEBI" id="CHEBI:15378"/>
        <dbReference type="ChEBI" id="CHEBI:30616"/>
        <dbReference type="ChEBI" id="CHEBI:43474"/>
        <dbReference type="ChEBI" id="CHEBI:456216"/>
    </reaction>
    <physiologicalReaction direction="left-to-right" evidence="1">
        <dbReference type="Rhea" id="RHEA:13066"/>
    </physiologicalReaction>
</comment>
<comment type="subunit">
    <text evidence="3 4">Homodimer (By similarity). Interacts with GET1 and GET4 (PubMed:28096354).</text>
</comment>
<comment type="interaction">
    <interactant intactId="EBI-4426052">
        <id>Q949M9</id>
    </interactant>
    <interactant intactId="EBI-2293075">
        <id>Q9LFR3</id>
        <label>GASA14</label>
    </interactant>
    <organismsDiffer>false</organismsDiffer>
    <experiments>2</experiments>
</comment>
<comment type="subcellular location">
    <subcellularLocation>
        <location evidence="4">Cytoplasm</location>
        <location evidence="4">Cytosol</location>
    </subcellularLocation>
    <subcellularLocation>
        <location evidence="3">Cytoplasm</location>
    </subcellularLocation>
    <subcellularLocation>
        <location evidence="3">Endoplasmic reticulum</location>
    </subcellularLocation>
</comment>
<comment type="disruption phenotype">
    <text evidence="4">Strong reduction of root hair length.</text>
</comment>
<comment type="similarity">
    <text evidence="3">Belongs to the arsA ATPase family.</text>
</comment>
<comment type="sequence caution" evidence="6">
    <conflict type="erroneous initiation">
        <sequence resource="EMBL-CDS" id="BAD94314"/>
    </conflict>
    <text>Extended N-terminus.</text>
</comment>
<keyword id="KW-0067">ATP-binding</keyword>
<keyword id="KW-0175">Coiled coil</keyword>
<keyword id="KW-0963">Cytoplasm</keyword>
<keyword id="KW-0256">Endoplasmic reticulum</keyword>
<keyword id="KW-0378">Hydrolase</keyword>
<keyword id="KW-0547">Nucleotide-binding</keyword>
<keyword id="KW-1185">Reference proteome</keyword>
<keyword id="KW-0813">Transport</keyword>
<proteinExistence type="evidence at protein level"/>
<accession>Q949M9</accession>
<accession>Q56ZR6</accession>
<evidence type="ECO:0000250" key="1">
    <source>
        <dbReference type="UniProtKB" id="Q6DYE4"/>
    </source>
</evidence>
<evidence type="ECO:0000255" key="2"/>
<evidence type="ECO:0000255" key="3">
    <source>
        <dbReference type="HAMAP-Rule" id="MF_03112"/>
    </source>
</evidence>
<evidence type="ECO:0000269" key="4">
    <source>
    </source>
</evidence>
<evidence type="ECO:0000303" key="5">
    <source>
    </source>
</evidence>
<evidence type="ECO:0000305" key="6"/>
<evidence type="ECO:0000312" key="7">
    <source>
        <dbReference type="Araport" id="AT1G01910"/>
    </source>
</evidence>
<evidence type="ECO:0000312" key="8">
    <source>
        <dbReference type="EMBL" id="AEE27348.1"/>
    </source>
</evidence>
<organism>
    <name type="scientific">Arabidopsis thaliana</name>
    <name type="common">Mouse-ear cress</name>
    <dbReference type="NCBI Taxonomy" id="3702"/>
    <lineage>
        <taxon>Eukaryota</taxon>
        <taxon>Viridiplantae</taxon>
        <taxon>Streptophyta</taxon>
        <taxon>Embryophyta</taxon>
        <taxon>Tracheophyta</taxon>
        <taxon>Spermatophyta</taxon>
        <taxon>Magnoliopsida</taxon>
        <taxon>eudicotyledons</taxon>
        <taxon>Gunneridae</taxon>
        <taxon>Pentapetalae</taxon>
        <taxon>rosids</taxon>
        <taxon>malvids</taxon>
        <taxon>Brassicales</taxon>
        <taxon>Brassicaceae</taxon>
        <taxon>Camelineae</taxon>
        <taxon>Arabidopsis</taxon>
    </lineage>
</organism>
<sequence>MAADLPEATVQNILDQESLKWVFVGGKGGVGKTTCSSILAICLASVRSSVLIISTDPAHNLSDAFQQRFTKSPTLVQGFSNLFAMEVDPTVETDDMAGTDGMDGLFSDLANAIPGIDEAMSFAEMLKLVQTMDYATIVFDTAPTGHTLRLLQFPATLEKGLSKLMSLKSRFGGLMTQMSRMFGMEDEFGEDALLGRLEGLKDVIEQVNRQFKDPDMTTFVCVCIPEFLSLYETERLVQELAKFEIDTHNIIINQVLYDDEDVESKLLRARMRMQQKYLDQFYMLYDDFNITKLPLLPEEVTGVEALKAFSHKFLTPYHPTTSRSNVEELERKVHTLRLQLKTAEEELERVKSG</sequence>
<gene>
    <name evidence="5" type="primary">GET3A</name>
    <name evidence="7" type="ordered locus">At1g01910</name>
    <name evidence="8" type="ORF">F22M8.4</name>
</gene>